<proteinExistence type="inferred from homology"/>
<protein>
    <recommendedName>
        <fullName evidence="1">Probable DNA-directed RNA polymerase subunit delta</fullName>
    </recommendedName>
    <alternativeName>
        <fullName evidence="1">RNAP delta factor</fullName>
    </alternativeName>
</protein>
<reference key="1">
    <citation type="journal article" date="2008" name="Antimicrob. Agents Chemother.">
        <title>Mutated response regulator graR is responsible for phenotypic conversion of Staphylococcus aureus from heterogeneous vancomycin-intermediate resistance to vancomycin-intermediate resistance.</title>
        <authorList>
            <person name="Neoh H.-M."/>
            <person name="Cui L."/>
            <person name="Yuzawa H."/>
            <person name="Takeuchi F."/>
            <person name="Matsuo M."/>
            <person name="Hiramatsu K."/>
        </authorList>
    </citation>
    <scope>NUCLEOTIDE SEQUENCE [LARGE SCALE GENOMIC DNA]</scope>
    <source>
        <strain>Mu3 / ATCC 700698</strain>
    </source>
</reference>
<sequence length="176" mass="20881">MKIQDYTKQMVDEKSFIDMAYTLLNDKGETMNLYDIIDEFRALGDYEYEEIENRVVQFYTDLNTDGRFLNVGENLWGLRDWYSVDDIEEKIAPTIQKFDILDADDEEDQNLKLLGEDEMDDDDDIPAQTDDQEELNDPEDEQVEEEINHSDIVIEEDEDELDEDEEVFEDEEDFND</sequence>
<dbReference type="EMBL" id="AP009324">
    <property type="protein sequence ID" value="BAF78995.1"/>
    <property type="molecule type" value="Genomic_DNA"/>
</dbReference>
<dbReference type="RefSeq" id="WP_000701483.1">
    <property type="nucleotide sequence ID" value="NZ_CTYB01000015.1"/>
</dbReference>
<dbReference type="SMR" id="A7X4Y0"/>
<dbReference type="GeneID" id="98346435"/>
<dbReference type="KEGG" id="saw:SAHV_2112"/>
<dbReference type="HOGENOM" id="CLU_116648_1_0_9"/>
<dbReference type="GO" id="GO:0000428">
    <property type="term" value="C:DNA-directed RNA polymerase complex"/>
    <property type="evidence" value="ECO:0007669"/>
    <property type="project" value="UniProtKB-KW"/>
</dbReference>
<dbReference type="GO" id="GO:0003899">
    <property type="term" value="F:DNA-directed RNA polymerase activity"/>
    <property type="evidence" value="ECO:0007669"/>
    <property type="project" value="UniProtKB-UniRule"/>
</dbReference>
<dbReference type="GO" id="GO:0006351">
    <property type="term" value="P:DNA-templated transcription"/>
    <property type="evidence" value="ECO:0007669"/>
    <property type="project" value="InterPro"/>
</dbReference>
<dbReference type="GO" id="GO:0006355">
    <property type="term" value="P:regulation of DNA-templated transcription"/>
    <property type="evidence" value="ECO:0007669"/>
    <property type="project" value="UniProtKB-UniRule"/>
</dbReference>
<dbReference type="Gene3D" id="1.10.10.1250">
    <property type="entry name" value="RNA polymerase, subunit delta, N-terminal domain"/>
    <property type="match status" value="1"/>
</dbReference>
<dbReference type="HAMAP" id="MF_00357">
    <property type="entry name" value="RNApol_bact_RpoE"/>
    <property type="match status" value="1"/>
</dbReference>
<dbReference type="InterPro" id="IPR007759">
    <property type="entry name" value="Asxl_HARE-HTH"/>
</dbReference>
<dbReference type="InterPro" id="IPR038087">
    <property type="entry name" value="RNAP_delta_N_dom_sf"/>
</dbReference>
<dbReference type="InterPro" id="IPR029757">
    <property type="entry name" value="RpoE"/>
</dbReference>
<dbReference type="NCBIfam" id="TIGR04567">
    <property type="entry name" value="RNAP_delt_lowGC"/>
    <property type="match status" value="1"/>
</dbReference>
<dbReference type="Pfam" id="PF05066">
    <property type="entry name" value="HARE-HTH"/>
    <property type="match status" value="1"/>
</dbReference>
<dbReference type="PROSITE" id="PS51913">
    <property type="entry name" value="HTH_HARE"/>
    <property type="match status" value="1"/>
</dbReference>
<comment type="function">
    <text evidence="1">Participates in both the initiation and recycling phases of transcription. In the presence of the delta subunit, RNAP displays an increased specificity of transcription, a decreased affinity for nucleic acids, and an increased efficiency of RNA synthesis because of enhanced recycling.</text>
</comment>
<comment type="subunit">
    <text evidence="1">RNAP is composed of a core of 2 alpha, a beta and a beta' subunits. The core is associated with a delta subunit and one of several sigma factors.</text>
</comment>
<comment type="similarity">
    <text evidence="1">Belongs to the RpoE family.</text>
</comment>
<organism>
    <name type="scientific">Staphylococcus aureus (strain Mu3 / ATCC 700698)</name>
    <dbReference type="NCBI Taxonomy" id="418127"/>
    <lineage>
        <taxon>Bacteria</taxon>
        <taxon>Bacillati</taxon>
        <taxon>Bacillota</taxon>
        <taxon>Bacilli</taxon>
        <taxon>Bacillales</taxon>
        <taxon>Staphylococcaceae</taxon>
        <taxon>Staphylococcus</taxon>
    </lineage>
</organism>
<keyword id="KW-0240">DNA-directed RNA polymerase</keyword>
<keyword id="KW-0548">Nucleotidyltransferase</keyword>
<keyword id="KW-0804">Transcription</keyword>
<keyword id="KW-0808">Transferase</keyword>
<accession>A7X4Y0</accession>
<evidence type="ECO:0000255" key="1">
    <source>
        <dbReference type="HAMAP-Rule" id="MF_00357"/>
    </source>
</evidence>
<evidence type="ECO:0000255" key="2">
    <source>
        <dbReference type="PROSITE-ProRule" id="PRU01261"/>
    </source>
</evidence>
<evidence type="ECO:0000256" key="3">
    <source>
        <dbReference type="SAM" id="MobiDB-lite"/>
    </source>
</evidence>
<name>RPOE_STAA1</name>
<gene>
    <name evidence="1" type="primary">rpoE</name>
    <name type="ordered locus">SAHV_2112</name>
</gene>
<feature type="chain" id="PRO_1000005874" description="Probable DNA-directed RNA polymerase subunit delta">
    <location>
        <begin position="1"/>
        <end position="176"/>
    </location>
</feature>
<feature type="domain" description="HTH HARE-type" evidence="2">
    <location>
        <begin position="14"/>
        <end position="81"/>
    </location>
</feature>
<feature type="region of interest" description="Disordered" evidence="3">
    <location>
        <begin position="114"/>
        <end position="176"/>
    </location>
</feature>
<feature type="compositionally biased region" description="Acidic residues" evidence="3">
    <location>
        <begin position="116"/>
        <end position="145"/>
    </location>
</feature>
<feature type="compositionally biased region" description="Acidic residues" evidence="3">
    <location>
        <begin position="153"/>
        <end position="176"/>
    </location>
</feature>